<accession>A9KY50</accession>
<keyword id="KW-0131">Cell cycle</keyword>
<keyword id="KW-0132">Cell division</keyword>
<keyword id="KW-0574">Periplasm</keyword>
<keyword id="KW-0732">Signal</keyword>
<reference key="1">
    <citation type="submission" date="2007-11" db="EMBL/GenBank/DDBJ databases">
        <title>Complete sequence of chromosome of Shewanella baltica OS195.</title>
        <authorList>
            <consortium name="US DOE Joint Genome Institute"/>
            <person name="Copeland A."/>
            <person name="Lucas S."/>
            <person name="Lapidus A."/>
            <person name="Barry K."/>
            <person name="Glavina del Rio T."/>
            <person name="Dalin E."/>
            <person name="Tice H."/>
            <person name="Pitluck S."/>
            <person name="Chain P."/>
            <person name="Malfatti S."/>
            <person name="Shin M."/>
            <person name="Vergez L."/>
            <person name="Schmutz J."/>
            <person name="Larimer F."/>
            <person name="Land M."/>
            <person name="Hauser L."/>
            <person name="Kyrpides N."/>
            <person name="Kim E."/>
            <person name="Brettar I."/>
            <person name="Rodrigues J."/>
            <person name="Konstantinidis K."/>
            <person name="Klappenbach J."/>
            <person name="Hofle M."/>
            <person name="Tiedje J."/>
            <person name="Richardson P."/>
        </authorList>
    </citation>
    <scope>NUCLEOTIDE SEQUENCE [LARGE SCALE GENOMIC DNA]</scope>
    <source>
        <strain>OS195</strain>
    </source>
</reference>
<comment type="function">
    <text evidence="1">Part of the Tol-Pal system, which plays a role in outer membrane invagination during cell division and is important for maintaining outer membrane integrity.</text>
</comment>
<comment type="subunit">
    <text evidence="1">The Tol-Pal system is composed of five core proteins: the inner membrane proteins TolA, TolQ and TolR, the periplasmic protein TolB and the outer membrane protein Pal. They form a network linking the inner and outer membranes and the peptidoglycan layer.</text>
</comment>
<comment type="subcellular location">
    <subcellularLocation>
        <location evidence="1">Periplasm</location>
    </subcellularLocation>
</comment>
<comment type="similarity">
    <text evidence="1">Belongs to the TolB family.</text>
</comment>
<proteinExistence type="inferred from homology"/>
<name>TOLB_SHEB9</name>
<organism>
    <name type="scientific">Shewanella baltica (strain OS195)</name>
    <dbReference type="NCBI Taxonomy" id="399599"/>
    <lineage>
        <taxon>Bacteria</taxon>
        <taxon>Pseudomonadati</taxon>
        <taxon>Pseudomonadota</taxon>
        <taxon>Gammaproteobacteria</taxon>
        <taxon>Alteromonadales</taxon>
        <taxon>Shewanellaceae</taxon>
        <taxon>Shewanella</taxon>
    </lineage>
</organism>
<protein>
    <recommendedName>
        <fullName evidence="1">Tol-Pal system protein TolB</fullName>
    </recommendedName>
</protein>
<evidence type="ECO:0000255" key="1">
    <source>
        <dbReference type="HAMAP-Rule" id="MF_00671"/>
    </source>
</evidence>
<feature type="signal peptide" evidence="1">
    <location>
        <begin position="1"/>
        <end position="21"/>
    </location>
</feature>
<feature type="chain" id="PRO_5000296833" description="Tol-Pal system protein TolB" evidence="1">
    <location>
        <begin position="22"/>
        <end position="442"/>
    </location>
</feature>
<sequence>MKILAKWLALAVLLCTTPAKAALDIVITEGVDAARPIAVMPFVWQGPGAAPQAIADVVMSDLVRSGTFKPLDELGLPQRNIGTVAQFQANSWSSVGAEALVLGTVKPYGTDQYLVSFDLIDLVKAQNQALKGPVSATEFLMDSRQTVISAAQFRQYGHRISDIVYEKLTGIRGAFLTRISYVVVNHTQKAPYQLMVADYDGVNEQMLLRSPEPLMSPTWSPDGRRLAYVSFENKKAEIFVQDLYTQVRTKVSSFPGINGAPAFSPDGKSLAITLSKDGQPEIYIIDIATKAIKRITNHYAIDTEPSWYPDGKSLIFTSERGGRPQIYRVELSSGKVSRETFEGEWNLGGSITPDGRSMIFVNRTNGKFNIARMDLSTRFMQVLTSTRLDESPSVAPNGTMVIYGTTYQGKQVLAAVSTDGRFKARLPAGQGEVKSPSWSPFL</sequence>
<gene>
    <name evidence="1" type="primary">tolB</name>
    <name type="ordered locus">Sbal195_1785</name>
</gene>
<dbReference type="EMBL" id="CP000891">
    <property type="protein sequence ID" value="ABX48956.1"/>
    <property type="molecule type" value="Genomic_DNA"/>
</dbReference>
<dbReference type="RefSeq" id="WP_012196906.1">
    <property type="nucleotide sequence ID" value="NC_009997.1"/>
</dbReference>
<dbReference type="SMR" id="A9KY50"/>
<dbReference type="GeneID" id="11772002"/>
<dbReference type="KEGG" id="sbn:Sbal195_1785"/>
<dbReference type="HOGENOM" id="CLU_047123_0_0_6"/>
<dbReference type="Proteomes" id="UP000000770">
    <property type="component" value="Chromosome"/>
</dbReference>
<dbReference type="GO" id="GO:0042597">
    <property type="term" value="C:periplasmic space"/>
    <property type="evidence" value="ECO:0007669"/>
    <property type="project" value="UniProtKB-SubCell"/>
</dbReference>
<dbReference type="GO" id="GO:0051301">
    <property type="term" value="P:cell division"/>
    <property type="evidence" value="ECO:0007669"/>
    <property type="project" value="UniProtKB-UniRule"/>
</dbReference>
<dbReference type="GO" id="GO:0017038">
    <property type="term" value="P:protein import"/>
    <property type="evidence" value="ECO:0007669"/>
    <property type="project" value="InterPro"/>
</dbReference>
<dbReference type="Gene3D" id="2.120.10.30">
    <property type="entry name" value="TolB, C-terminal domain"/>
    <property type="match status" value="1"/>
</dbReference>
<dbReference type="Gene3D" id="3.40.50.10070">
    <property type="entry name" value="TolB, N-terminal domain"/>
    <property type="match status" value="1"/>
</dbReference>
<dbReference type="HAMAP" id="MF_00671">
    <property type="entry name" value="TolB"/>
    <property type="match status" value="1"/>
</dbReference>
<dbReference type="InterPro" id="IPR011042">
    <property type="entry name" value="6-blade_b-propeller_TolB-like"/>
</dbReference>
<dbReference type="InterPro" id="IPR011659">
    <property type="entry name" value="PD40"/>
</dbReference>
<dbReference type="InterPro" id="IPR014167">
    <property type="entry name" value="Tol-Pal_TolB"/>
</dbReference>
<dbReference type="InterPro" id="IPR007195">
    <property type="entry name" value="TolB_N"/>
</dbReference>
<dbReference type="NCBIfam" id="TIGR02800">
    <property type="entry name" value="propeller_TolB"/>
    <property type="match status" value="1"/>
</dbReference>
<dbReference type="PANTHER" id="PTHR36842:SF1">
    <property type="entry name" value="PROTEIN TOLB"/>
    <property type="match status" value="1"/>
</dbReference>
<dbReference type="PANTHER" id="PTHR36842">
    <property type="entry name" value="PROTEIN TOLB HOMOLOG"/>
    <property type="match status" value="1"/>
</dbReference>
<dbReference type="Pfam" id="PF07676">
    <property type="entry name" value="PD40"/>
    <property type="match status" value="4"/>
</dbReference>
<dbReference type="Pfam" id="PF04052">
    <property type="entry name" value="TolB_N"/>
    <property type="match status" value="1"/>
</dbReference>
<dbReference type="SUPFAM" id="SSF52964">
    <property type="entry name" value="TolB, N-terminal domain"/>
    <property type="match status" value="1"/>
</dbReference>
<dbReference type="SUPFAM" id="SSF69304">
    <property type="entry name" value="Tricorn protease N-terminal domain"/>
    <property type="match status" value="1"/>
</dbReference>